<comment type="catalytic activity">
    <reaction evidence="1">
        <text>CMP + ATP = CDP + ADP</text>
        <dbReference type="Rhea" id="RHEA:11600"/>
        <dbReference type="ChEBI" id="CHEBI:30616"/>
        <dbReference type="ChEBI" id="CHEBI:58069"/>
        <dbReference type="ChEBI" id="CHEBI:60377"/>
        <dbReference type="ChEBI" id="CHEBI:456216"/>
        <dbReference type="EC" id="2.7.4.25"/>
    </reaction>
</comment>
<comment type="catalytic activity">
    <reaction evidence="1">
        <text>dCMP + ATP = dCDP + ADP</text>
        <dbReference type="Rhea" id="RHEA:25094"/>
        <dbReference type="ChEBI" id="CHEBI:30616"/>
        <dbReference type="ChEBI" id="CHEBI:57566"/>
        <dbReference type="ChEBI" id="CHEBI:58593"/>
        <dbReference type="ChEBI" id="CHEBI:456216"/>
        <dbReference type="EC" id="2.7.4.25"/>
    </reaction>
</comment>
<comment type="subcellular location">
    <subcellularLocation>
        <location evidence="1">Cytoplasm</location>
    </subcellularLocation>
</comment>
<comment type="similarity">
    <text evidence="1">Belongs to the cytidylate kinase family. Type 1 subfamily.</text>
</comment>
<reference key="1">
    <citation type="journal article" date="2007" name="Genome Res.">
        <title>Genome sequence of a proteolytic (Group I) Clostridium botulinum strain Hall A and comparative analysis of the clostridial genomes.</title>
        <authorList>
            <person name="Sebaihia M."/>
            <person name="Peck M.W."/>
            <person name="Minton N.P."/>
            <person name="Thomson N.R."/>
            <person name="Holden M.T.G."/>
            <person name="Mitchell W.J."/>
            <person name="Carter A.T."/>
            <person name="Bentley S.D."/>
            <person name="Mason D.R."/>
            <person name="Crossman L."/>
            <person name="Paul C.J."/>
            <person name="Ivens A."/>
            <person name="Wells-Bennik M.H.J."/>
            <person name="Davis I.J."/>
            <person name="Cerdeno-Tarraga A.M."/>
            <person name="Churcher C."/>
            <person name="Quail M.A."/>
            <person name="Chillingworth T."/>
            <person name="Feltwell T."/>
            <person name="Fraser A."/>
            <person name="Goodhead I."/>
            <person name="Hance Z."/>
            <person name="Jagels K."/>
            <person name="Larke N."/>
            <person name="Maddison M."/>
            <person name="Moule S."/>
            <person name="Mungall K."/>
            <person name="Norbertczak H."/>
            <person name="Rabbinowitsch E."/>
            <person name="Sanders M."/>
            <person name="Simmonds M."/>
            <person name="White B."/>
            <person name="Whithead S."/>
            <person name="Parkhill J."/>
        </authorList>
    </citation>
    <scope>NUCLEOTIDE SEQUENCE [LARGE SCALE GENOMIC DNA]</scope>
    <source>
        <strain>Hall / ATCC 3502 / NCTC 13319 / Type A</strain>
    </source>
</reference>
<reference key="2">
    <citation type="journal article" date="2007" name="PLoS ONE">
        <title>Analysis of the neurotoxin complex genes in Clostridium botulinum A1-A4 and B1 strains: BoNT/A3, /Ba4 and /B1 clusters are located within plasmids.</title>
        <authorList>
            <person name="Smith T.J."/>
            <person name="Hill K.K."/>
            <person name="Foley B.T."/>
            <person name="Detter J.C."/>
            <person name="Munk A.C."/>
            <person name="Bruce D.C."/>
            <person name="Doggett N.A."/>
            <person name="Smith L.A."/>
            <person name="Marks J.D."/>
            <person name="Xie G."/>
            <person name="Brettin T.S."/>
        </authorList>
    </citation>
    <scope>NUCLEOTIDE SEQUENCE [LARGE SCALE GENOMIC DNA]</scope>
    <source>
        <strain>Hall / ATCC 3502 / NCTC 13319 / Type A</strain>
    </source>
</reference>
<protein>
    <recommendedName>
        <fullName evidence="1">Cytidylate kinase</fullName>
        <shortName evidence="1">CK</shortName>
        <ecNumber evidence="1">2.7.4.25</ecNumber>
    </recommendedName>
    <alternativeName>
        <fullName evidence="1">Cytidine monophosphate kinase</fullName>
        <shortName evidence="1">CMP kinase</shortName>
    </alternativeName>
</protein>
<evidence type="ECO:0000255" key="1">
    <source>
        <dbReference type="HAMAP-Rule" id="MF_00238"/>
    </source>
</evidence>
<dbReference type="EC" id="2.7.4.25" evidence="1"/>
<dbReference type="EMBL" id="CP000727">
    <property type="protein sequence ID" value="ABS38179.1"/>
    <property type="molecule type" value="Genomic_DNA"/>
</dbReference>
<dbReference type="EMBL" id="AM412317">
    <property type="protein sequence ID" value="CAL83347.1"/>
    <property type="molecule type" value="Genomic_DNA"/>
</dbReference>
<dbReference type="RefSeq" id="WP_003358949.1">
    <property type="nucleotide sequence ID" value="NC_009698.1"/>
</dbReference>
<dbReference type="RefSeq" id="YP_001254308.1">
    <property type="nucleotide sequence ID" value="NC_009495.1"/>
</dbReference>
<dbReference type="RefSeq" id="YP_001387605.1">
    <property type="nucleotide sequence ID" value="NC_009698.1"/>
</dbReference>
<dbReference type="SMR" id="A5I2T0"/>
<dbReference type="GeneID" id="5186063"/>
<dbReference type="KEGG" id="cbh:CLC_1750"/>
<dbReference type="KEGG" id="cbo:CBO1808"/>
<dbReference type="PATRIC" id="fig|413999.7.peg.1779"/>
<dbReference type="HOGENOM" id="CLU_079959_0_2_9"/>
<dbReference type="PRO" id="PR:A5I2T0"/>
<dbReference type="Proteomes" id="UP000001986">
    <property type="component" value="Chromosome"/>
</dbReference>
<dbReference type="GO" id="GO:0005829">
    <property type="term" value="C:cytosol"/>
    <property type="evidence" value="ECO:0000318"/>
    <property type="project" value="GO_Central"/>
</dbReference>
<dbReference type="GO" id="GO:0004127">
    <property type="term" value="F:(d)CMP kinase activity"/>
    <property type="evidence" value="ECO:0000318"/>
    <property type="project" value="GO_Central"/>
</dbReference>
<dbReference type="GO" id="GO:0005524">
    <property type="term" value="F:ATP binding"/>
    <property type="evidence" value="ECO:0007669"/>
    <property type="project" value="UniProtKB-UniRule"/>
</dbReference>
<dbReference type="GO" id="GO:0036430">
    <property type="term" value="F:CMP kinase activity"/>
    <property type="evidence" value="ECO:0007669"/>
    <property type="project" value="RHEA"/>
</dbReference>
<dbReference type="GO" id="GO:0036431">
    <property type="term" value="F:dCMP kinase activity"/>
    <property type="evidence" value="ECO:0007669"/>
    <property type="project" value="RHEA"/>
</dbReference>
<dbReference type="GO" id="GO:0015949">
    <property type="term" value="P:nucleobase-containing small molecule interconversion"/>
    <property type="evidence" value="ECO:0000318"/>
    <property type="project" value="GO_Central"/>
</dbReference>
<dbReference type="GO" id="GO:0006220">
    <property type="term" value="P:pyrimidine nucleotide metabolic process"/>
    <property type="evidence" value="ECO:0007669"/>
    <property type="project" value="UniProtKB-UniRule"/>
</dbReference>
<dbReference type="CDD" id="cd02020">
    <property type="entry name" value="CMPK"/>
    <property type="match status" value="1"/>
</dbReference>
<dbReference type="FunFam" id="3.40.50.300:FF:002511">
    <property type="entry name" value="Cytidylate kinase"/>
    <property type="match status" value="1"/>
</dbReference>
<dbReference type="Gene3D" id="3.40.50.300">
    <property type="entry name" value="P-loop containing nucleotide triphosphate hydrolases"/>
    <property type="match status" value="1"/>
</dbReference>
<dbReference type="HAMAP" id="MF_00238">
    <property type="entry name" value="Cytidyl_kinase_type1"/>
    <property type="match status" value="1"/>
</dbReference>
<dbReference type="InterPro" id="IPR003136">
    <property type="entry name" value="Cytidylate_kin"/>
</dbReference>
<dbReference type="InterPro" id="IPR011994">
    <property type="entry name" value="Cytidylate_kinase_dom"/>
</dbReference>
<dbReference type="InterPro" id="IPR027417">
    <property type="entry name" value="P-loop_NTPase"/>
</dbReference>
<dbReference type="NCBIfam" id="TIGR00017">
    <property type="entry name" value="cmk"/>
    <property type="match status" value="1"/>
</dbReference>
<dbReference type="PANTHER" id="PTHR21299:SF2">
    <property type="entry name" value="CYTIDYLATE KINASE"/>
    <property type="match status" value="1"/>
</dbReference>
<dbReference type="PANTHER" id="PTHR21299">
    <property type="entry name" value="CYTIDYLATE KINASE/PANTOATE-BETA-ALANINE LIGASE"/>
    <property type="match status" value="1"/>
</dbReference>
<dbReference type="Pfam" id="PF02224">
    <property type="entry name" value="Cytidylate_kin"/>
    <property type="match status" value="1"/>
</dbReference>
<dbReference type="SUPFAM" id="SSF52540">
    <property type="entry name" value="P-loop containing nucleoside triphosphate hydrolases"/>
    <property type="match status" value="1"/>
</dbReference>
<keyword id="KW-0067">ATP-binding</keyword>
<keyword id="KW-0963">Cytoplasm</keyword>
<keyword id="KW-0418">Kinase</keyword>
<keyword id="KW-0547">Nucleotide-binding</keyword>
<keyword id="KW-1185">Reference proteome</keyword>
<keyword id="KW-0808">Transferase</keyword>
<name>KCY_CLOBH</name>
<feature type="chain" id="PRO_1000125279" description="Cytidylate kinase">
    <location>
        <begin position="1"/>
        <end position="217"/>
    </location>
</feature>
<feature type="binding site" evidence="1">
    <location>
        <begin position="10"/>
        <end position="18"/>
    </location>
    <ligand>
        <name>ATP</name>
        <dbReference type="ChEBI" id="CHEBI:30616"/>
    </ligand>
</feature>
<organism>
    <name type="scientific">Clostridium botulinum (strain Hall / ATCC 3502 / NCTC 13319 / Type A)</name>
    <dbReference type="NCBI Taxonomy" id="441771"/>
    <lineage>
        <taxon>Bacteria</taxon>
        <taxon>Bacillati</taxon>
        <taxon>Bacillota</taxon>
        <taxon>Clostridia</taxon>
        <taxon>Eubacteriales</taxon>
        <taxon>Clostridiaceae</taxon>
        <taxon>Clostridium</taxon>
    </lineage>
</organism>
<proteinExistence type="inferred from homology"/>
<sequence length="217" mass="24444">MLDISIAIDGPAGAGKSTIAKIIGNKLNIMYINTGSMYRAVTLMALKNNIEPYDIESLKALINSMNISFNGNNIIVNGKDLEEDIRMPIINNNVSKYAAVEEVRELLVSMQQNISKKYNVVMDGRDIGTVVLKDAPYKFFITASAEVRAKRRLKELKEKGININFRDVLKEIKERDYIDSNRKVNPLKQSKDAILIDTSNFTIEEVVDKICTIIKKD</sequence>
<gene>
    <name evidence="1" type="primary">cmk</name>
    <name type="ordered locus">CBO1808</name>
    <name type="ordered locus">CLC_1750</name>
</gene>
<accession>A5I2T0</accession>
<accession>A7G490</accession>